<evidence type="ECO:0000255" key="1">
    <source>
        <dbReference type="HAMAP-Rule" id="MF_00008"/>
    </source>
</evidence>
<evidence type="ECO:0000305" key="2"/>
<organism>
    <name type="scientific">Streptococcus pyogenes serotype M12 (strain MGAS2096)</name>
    <dbReference type="NCBI Taxonomy" id="370553"/>
    <lineage>
        <taxon>Bacteria</taxon>
        <taxon>Bacillati</taxon>
        <taxon>Bacillota</taxon>
        <taxon>Bacilli</taxon>
        <taxon>Lactobacillales</taxon>
        <taxon>Streptococcaceae</taxon>
        <taxon>Streptococcus</taxon>
    </lineage>
</organism>
<name>TYSY_STRPB</name>
<protein>
    <recommendedName>
        <fullName evidence="1">Thymidylate synthase</fullName>
        <shortName evidence="1">TS</shortName>
        <shortName evidence="1">TSase</shortName>
        <ecNumber evidence="1">2.1.1.45</ecNumber>
    </recommendedName>
</protein>
<feature type="chain" id="PRO_0000321485" description="Thymidylate synthase">
    <location>
        <begin position="1"/>
        <end position="279"/>
    </location>
</feature>
<feature type="active site" description="Nucleophile" evidence="1">
    <location>
        <position position="154"/>
    </location>
</feature>
<feature type="binding site" evidence="1">
    <location>
        <begin position="133"/>
        <end position="134"/>
    </location>
    <ligand>
        <name>dUMP</name>
        <dbReference type="ChEBI" id="CHEBI:246422"/>
        <note>ligand shared between dimeric partners</note>
    </ligand>
</feature>
<feature type="binding site" description="in other chain" evidence="1">
    <location>
        <begin position="178"/>
        <end position="181"/>
    </location>
    <ligand>
        <name>dUMP</name>
        <dbReference type="ChEBI" id="CHEBI:246422"/>
        <note>ligand shared between dimeric partners</note>
    </ligand>
</feature>
<feature type="binding site" evidence="1">
    <location>
        <position position="181"/>
    </location>
    <ligand>
        <name>(6R)-5,10-methylene-5,6,7,8-tetrahydrofolate</name>
        <dbReference type="ChEBI" id="CHEBI:15636"/>
    </ligand>
</feature>
<feature type="binding site" description="in other chain" evidence="1">
    <location>
        <position position="189"/>
    </location>
    <ligand>
        <name>dUMP</name>
        <dbReference type="ChEBI" id="CHEBI:246422"/>
        <note>ligand shared between dimeric partners</note>
    </ligand>
</feature>
<feature type="binding site" description="in other chain" evidence="1">
    <location>
        <begin position="219"/>
        <end position="221"/>
    </location>
    <ligand>
        <name>dUMP</name>
        <dbReference type="ChEBI" id="CHEBI:246422"/>
        <note>ligand shared between dimeric partners</note>
    </ligand>
</feature>
<feature type="binding site" evidence="1">
    <location>
        <position position="278"/>
    </location>
    <ligand>
        <name>(6R)-5,10-methylene-5,6,7,8-tetrahydrofolate</name>
        <dbReference type="ChEBI" id="CHEBI:15636"/>
    </ligand>
</feature>
<accession>Q1JC96</accession>
<keyword id="KW-0963">Cytoplasm</keyword>
<keyword id="KW-0489">Methyltransferase</keyword>
<keyword id="KW-0545">Nucleotide biosynthesis</keyword>
<keyword id="KW-0808">Transferase</keyword>
<reference key="1">
    <citation type="journal article" date="2006" name="Proc. Natl. Acad. Sci. U.S.A.">
        <title>Molecular genetic anatomy of inter- and intraserotype variation in the human bacterial pathogen group A Streptococcus.</title>
        <authorList>
            <person name="Beres S.B."/>
            <person name="Richter E.W."/>
            <person name="Nagiec M.J."/>
            <person name="Sumby P."/>
            <person name="Porcella S.F."/>
            <person name="DeLeo F.R."/>
            <person name="Musser J.M."/>
        </authorList>
    </citation>
    <scope>NUCLEOTIDE SEQUENCE [LARGE SCALE GENOMIC DNA]</scope>
    <source>
        <strain>MGAS2096</strain>
    </source>
</reference>
<dbReference type="EC" id="2.1.1.45" evidence="1"/>
<dbReference type="EMBL" id="CP000261">
    <property type="protein sequence ID" value="ABF35812.1"/>
    <property type="status" value="ALT_INIT"/>
    <property type="molecule type" value="Genomic_DNA"/>
</dbReference>
<dbReference type="SMR" id="Q1JC96"/>
<dbReference type="KEGG" id="spj:MGAS2096_Spy0760"/>
<dbReference type="HOGENOM" id="CLU_021669_0_0_9"/>
<dbReference type="UniPathway" id="UPA00575"/>
<dbReference type="GO" id="GO:0005829">
    <property type="term" value="C:cytosol"/>
    <property type="evidence" value="ECO:0007669"/>
    <property type="project" value="TreeGrafter"/>
</dbReference>
<dbReference type="GO" id="GO:0004799">
    <property type="term" value="F:thymidylate synthase activity"/>
    <property type="evidence" value="ECO:0007669"/>
    <property type="project" value="UniProtKB-UniRule"/>
</dbReference>
<dbReference type="GO" id="GO:0006231">
    <property type="term" value="P:dTMP biosynthetic process"/>
    <property type="evidence" value="ECO:0007669"/>
    <property type="project" value="UniProtKB-UniRule"/>
</dbReference>
<dbReference type="GO" id="GO:0006235">
    <property type="term" value="P:dTTP biosynthetic process"/>
    <property type="evidence" value="ECO:0007669"/>
    <property type="project" value="UniProtKB-UniRule"/>
</dbReference>
<dbReference type="GO" id="GO:0032259">
    <property type="term" value="P:methylation"/>
    <property type="evidence" value="ECO:0007669"/>
    <property type="project" value="UniProtKB-KW"/>
</dbReference>
<dbReference type="CDD" id="cd00351">
    <property type="entry name" value="TS_Pyrimidine_HMase"/>
    <property type="match status" value="1"/>
</dbReference>
<dbReference type="Gene3D" id="3.30.572.10">
    <property type="entry name" value="Thymidylate synthase/dCMP hydroxymethylase domain"/>
    <property type="match status" value="1"/>
</dbReference>
<dbReference type="HAMAP" id="MF_00008">
    <property type="entry name" value="Thymidy_synth_bact"/>
    <property type="match status" value="1"/>
</dbReference>
<dbReference type="InterPro" id="IPR045097">
    <property type="entry name" value="Thymidate_synth/dCMP_Mease"/>
</dbReference>
<dbReference type="InterPro" id="IPR023451">
    <property type="entry name" value="Thymidate_synth/dCMP_Mease_dom"/>
</dbReference>
<dbReference type="InterPro" id="IPR036926">
    <property type="entry name" value="Thymidate_synth/dCMP_Mease_sf"/>
</dbReference>
<dbReference type="InterPro" id="IPR000398">
    <property type="entry name" value="Thymidylate_synthase"/>
</dbReference>
<dbReference type="InterPro" id="IPR020940">
    <property type="entry name" value="Thymidylate_synthase_AS"/>
</dbReference>
<dbReference type="NCBIfam" id="NF002495">
    <property type="entry name" value="PRK01827.1-1"/>
    <property type="match status" value="1"/>
</dbReference>
<dbReference type="PANTHER" id="PTHR11548">
    <property type="entry name" value="THYMIDYLATE SYNTHASE 1"/>
    <property type="match status" value="1"/>
</dbReference>
<dbReference type="PANTHER" id="PTHR11548:SF1">
    <property type="entry name" value="THYMIDYLATE SYNTHASE 1"/>
    <property type="match status" value="1"/>
</dbReference>
<dbReference type="Pfam" id="PF00303">
    <property type="entry name" value="Thymidylat_synt"/>
    <property type="match status" value="1"/>
</dbReference>
<dbReference type="PRINTS" id="PR00108">
    <property type="entry name" value="THYMDSNTHASE"/>
</dbReference>
<dbReference type="SUPFAM" id="SSF55831">
    <property type="entry name" value="Thymidylate synthase/dCMP hydroxymethylase"/>
    <property type="match status" value="1"/>
</dbReference>
<dbReference type="PROSITE" id="PS00091">
    <property type="entry name" value="THYMIDYLATE_SYNTHASE"/>
    <property type="match status" value="1"/>
</dbReference>
<gene>
    <name evidence="1" type="primary">thyA</name>
    <name type="ordered locus">MGAS2096_Spy0760</name>
</gene>
<sequence length="279" mass="32598">MTKADQIFKANIQKIINEGSLSEQARPKYKDGRTAHSKYITGAFAEYDLAKGEFPITTLRPIPIKSAIKELFWIYQDQSNSLDVLEAKYNVHYWNEWEVDQTRTIGQRYGAVVKKHDIISKILKQLAENPWNRRNVISLWDYEAFEETKGLLPCAFQIMFDVRRVGEDLYLDASLTQRSNDILVAHHINAMQYVALQMMFAKHFGWKIGKFFYFVNNLHIYDNQFDQAQELLKRQPVASQPKLVLNVPDGTNFFDIKPDDFELQNYDPVKPQLHFDLAI</sequence>
<proteinExistence type="inferred from homology"/>
<comment type="function">
    <text evidence="1">Catalyzes the reductive methylation of 2'-deoxyuridine-5'-monophosphate (dUMP) to 2'-deoxythymidine-5'-monophosphate (dTMP) while utilizing 5,10-methylenetetrahydrofolate (mTHF) as the methyl donor and reductant in the reaction, yielding dihydrofolate (DHF) as a by-product. This enzymatic reaction provides an intracellular de novo source of dTMP, an essential precursor for DNA biosynthesis.</text>
</comment>
<comment type="catalytic activity">
    <reaction evidence="1">
        <text>dUMP + (6R)-5,10-methylene-5,6,7,8-tetrahydrofolate = 7,8-dihydrofolate + dTMP</text>
        <dbReference type="Rhea" id="RHEA:12104"/>
        <dbReference type="ChEBI" id="CHEBI:15636"/>
        <dbReference type="ChEBI" id="CHEBI:57451"/>
        <dbReference type="ChEBI" id="CHEBI:63528"/>
        <dbReference type="ChEBI" id="CHEBI:246422"/>
        <dbReference type="EC" id="2.1.1.45"/>
    </reaction>
</comment>
<comment type="pathway">
    <text evidence="1">Pyrimidine metabolism; dTTP biosynthesis.</text>
</comment>
<comment type="subunit">
    <text evidence="1">Homodimer.</text>
</comment>
<comment type="subcellular location">
    <subcellularLocation>
        <location evidence="1">Cytoplasm</location>
    </subcellularLocation>
</comment>
<comment type="similarity">
    <text evidence="1">Belongs to the thymidylate synthase family. Bacterial-type ThyA subfamily.</text>
</comment>
<comment type="sequence caution" evidence="2">
    <conflict type="erroneous initiation">
        <sequence resource="EMBL-CDS" id="ABF35812"/>
    </conflict>
</comment>